<name>FLIE_RHOBA</name>
<proteinExistence type="inferred from homology"/>
<protein>
    <recommendedName>
        <fullName evidence="1">Flagellar hook-basal body complex protein FliE</fullName>
    </recommendedName>
</protein>
<dbReference type="EMBL" id="BX294146">
    <property type="protein sequence ID" value="CAD75366.1"/>
    <property type="status" value="ALT_INIT"/>
    <property type="molecule type" value="Genomic_DNA"/>
</dbReference>
<dbReference type="RefSeq" id="NP_867819.1">
    <property type="nucleotide sequence ID" value="NC_005027.1"/>
</dbReference>
<dbReference type="RefSeq" id="WP_164922067.1">
    <property type="nucleotide sequence ID" value="NC_005027.1"/>
</dbReference>
<dbReference type="SMR" id="Q7UNQ2"/>
<dbReference type="STRING" id="243090.RB7444"/>
<dbReference type="EnsemblBacteria" id="CAD75366">
    <property type="protein sequence ID" value="CAD75366"/>
    <property type="gene ID" value="RB7444"/>
</dbReference>
<dbReference type="KEGG" id="rba:RB7444"/>
<dbReference type="PATRIC" id="fig|243090.15.peg.3594"/>
<dbReference type="eggNOG" id="COG1677">
    <property type="taxonomic scope" value="Bacteria"/>
</dbReference>
<dbReference type="HOGENOM" id="CLU_147249_3_1_0"/>
<dbReference type="InParanoid" id="Q7UNQ2"/>
<dbReference type="OrthoDB" id="285952at2"/>
<dbReference type="Proteomes" id="UP000001025">
    <property type="component" value="Chromosome"/>
</dbReference>
<dbReference type="GO" id="GO:0009425">
    <property type="term" value="C:bacterial-type flagellum basal body"/>
    <property type="evidence" value="ECO:0007669"/>
    <property type="project" value="UniProtKB-SubCell"/>
</dbReference>
<dbReference type="GO" id="GO:0003774">
    <property type="term" value="F:cytoskeletal motor activity"/>
    <property type="evidence" value="ECO:0007669"/>
    <property type="project" value="InterPro"/>
</dbReference>
<dbReference type="GO" id="GO:0005198">
    <property type="term" value="F:structural molecule activity"/>
    <property type="evidence" value="ECO:0007669"/>
    <property type="project" value="InterPro"/>
</dbReference>
<dbReference type="GO" id="GO:0044780">
    <property type="term" value="P:bacterial-type flagellum assembly"/>
    <property type="evidence" value="ECO:0000318"/>
    <property type="project" value="GO_Central"/>
</dbReference>
<dbReference type="GO" id="GO:0071973">
    <property type="term" value="P:bacterial-type flagellum-dependent cell motility"/>
    <property type="evidence" value="ECO:0007669"/>
    <property type="project" value="InterPro"/>
</dbReference>
<dbReference type="HAMAP" id="MF_00724">
    <property type="entry name" value="FliE"/>
    <property type="match status" value="1"/>
</dbReference>
<dbReference type="InterPro" id="IPR001624">
    <property type="entry name" value="FliE"/>
</dbReference>
<dbReference type="NCBIfam" id="TIGR00205">
    <property type="entry name" value="fliE"/>
    <property type="match status" value="1"/>
</dbReference>
<dbReference type="PANTHER" id="PTHR34653">
    <property type="match status" value="1"/>
</dbReference>
<dbReference type="PANTHER" id="PTHR34653:SF1">
    <property type="entry name" value="FLAGELLAR HOOK-BASAL BODY COMPLEX PROTEIN FLIE"/>
    <property type="match status" value="1"/>
</dbReference>
<dbReference type="Pfam" id="PF02049">
    <property type="entry name" value="FliE"/>
    <property type="match status" value="1"/>
</dbReference>
<dbReference type="PRINTS" id="PR01006">
    <property type="entry name" value="FLGHOOKFLIE"/>
</dbReference>
<sequence>MRPVASFRPPPTFSALQGGASSQATKTAGIDQRGTNQAFSLLDPQSTQSNSTDSSFGEMGNLLMNQVKGVNSMQNQADSMVHSMLTGGDVNEAEVLTSVQKADLAFRMLMQIRNKLMDAYREIQQVQI</sequence>
<reference key="1">
    <citation type="journal article" date="2003" name="Proc. Natl. Acad. Sci. U.S.A.">
        <title>Complete genome sequence of the marine planctomycete Pirellula sp. strain 1.</title>
        <authorList>
            <person name="Gloeckner F.O."/>
            <person name="Kube M."/>
            <person name="Bauer M."/>
            <person name="Teeling H."/>
            <person name="Lombardot T."/>
            <person name="Ludwig W."/>
            <person name="Gade D."/>
            <person name="Beck A."/>
            <person name="Borzym K."/>
            <person name="Heitmann K."/>
            <person name="Rabus R."/>
            <person name="Schlesner H."/>
            <person name="Amann R."/>
            <person name="Reinhardt R."/>
        </authorList>
    </citation>
    <scope>NUCLEOTIDE SEQUENCE [LARGE SCALE GENOMIC DNA]</scope>
    <source>
        <strain>DSM 10527 / NCIMB 13988 / SH1</strain>
    </source>
</reference>
<keyword id="KW-0975">Bacterial flagellum</keyword>
<keyword id="KW-1185">Reference proteome</keyword>
<accession>Q7UNQ2</accession>
<organism>
    <name type="scientific">Rhodopirellula baltica (strain DSM 10527 / NCIMB 13988 / SH1)</name>
    <dbReference type="NCBI Taxonomy" id="243090"/>
    <lineage>
        <taxon>Bacteria</taxon>
        <taxon>Pseudomonadati</taxon>
        <taxon>Planctomycetota</taxon>
        <taxon>Planctomycetia</taxon>
        <taxon>Pirellulales</taxon>
        <taxon>Pirellulaceae</taxon>
        <taxon>Rhodopirellula</taxon>
    </lineage>
</organism>
<comment type="subcellular location">
    <subcellularLocation>
        <location evidence="1">Bacterial flagellum basal body</location>
    </subcellularLocation>
</comment>
<comment type="similarity">
    <text evidence="1">Belongs to the FliE family.</text>
</comment>
<comment type="sequence caution" evidence="3">
    <conflict type="erroneous initiation">
        <sequence resource="EMBL-CDS" id="CAD75366"/>
    </conflict>
</comment>
<feature type="chain" id="PRO_0000105562" description="Flagellar hook-basal body complex protein FliE">
    <location>
        <begin position="1"/>
        <end position="128"/>
    </location>
</feature>
<feature type="region of interest" description="Disordered" evidence="2">
    <location>
        <begin position="1"/>
        <end position="60"/>
    </location>
</feature>
<feature type="compositionally biased region" description="Polar residues" evidence="2">
    <location>
        <begin position="33"/>
        <end position="55"/>
    </location>
</feature>
<evidence type="ECO:0000255" key="1">
    <source>
        <dbReference type="HAMAP-Rule" id="MF_00724"/>
    </source>
</evidence>
<evidence type="ECO:0000256" key="2">
    <source>
        <dbReference type="SAM" id="MobiDB-lite"/>
    </source>
</evidence>
<evidence type="ECO:0000305" key="3"/>
<gene>
    <name evidence="1" type="primary">fliE</name>
    <name type="ordered locus">RB7444</name>
</gene>